<feature type="chain" id="PRO_1000000677" description="Thymidylate synthase">
    <location>
        <begin position="1"/>
        <end position="264"/>
    </location>
</feature>
<feature type="active site" description="Nucleophile" evidence="1">
    <location>
        <position position="146"/>
    </location>
</feature>
<feature type="binding site" description="in other chain" evidence="1">
    <location>
        <position position="21"/>
    </location>
    <ligand>
        <name>dUMP</name>
        <dbReference type="ChEBI" id="CHEBI:246422"/>
        <note>ligand shared between dimeric partners</note>
    </ligand>
</feature>
<feature type="binding site" evidence="1">
    <location>
        <position position="51"/>
    </location>
    <ligand>
        <name>(6R)-5,10-methylene-5,6,7,8-tetrahydrofolate</name>
        <dbReference type="ChEBI" id="CHEBI:15636"/>
    </ligand>
</feature>
<feature type="binding site" evidence="1">
    <location>
        <begin position="126"/>
        <end position="127"/>
    </location>
    <ligand>
        <name>dUMP</name>
        <dbReference type="ChEBI" id="CHEBI:246422"/>
        <note>ligand shared between dimeric partners</note>
    </ligand>
</feature>
<feature type="binding site" description="in other chain" evidence="1">
    <location>
        <begin position="166"/>
        <end position="169"/>
    </location>
    <ligand>
        <name>dUMP</name>
        <dbReference type="ChEBI" id="CHEBI:246422"/>
        <note>ligand shared between dimeric partners</note>
    </ligand>
</feature>
<feature type="binding site" evidence="1">
    <location>
        <position position="169"/>
    </location>
    <ligand>
        <name>(6R)-5,10-methylene-5,6,7,8-tetrahydrofolate</name>
        <dbReference type="ChEBI" id="CHEBI:15636"/>
    </ligand>
</feature>
<feature type="binding site" description="in other chain" evidence="1">
    <location>
        <position position="177"/>
    </location>
    <ligand>
        <name>dUMP</name>
        <dbReference type="ChEBI" id="CHEBI:246422"/>
        <note>ligand shared between dimeric partners</note>
    </ligand>
</feature>
<feature type="binding site" description="in other chain" evidence="1">
    <location>
        <begin position="207"/>
        <end position="209"/>
    </location>
    <ligand>
        <name>dUMP</name>
        <dbReference type="ChEBI" id="CHEBI:246422"/>
        <note>ligand shared between dimeric partners</note>
    </ligand>
</feature>
<feature type="binding site" evidence="1">
    <location>
        <position position="263"/>
    </location>
    <ligand>
        <name>(6R)-5,10-methylene-5,6,7,8-tetrahydrofolate</name>
        <dbReference type="ChEBI" id="CHEBI:15636"/>
    </ligand>
</feature>
<dbReference type="EC" id="2.1.1.45" evidence="1"/>
<dbReference type="EMBL" id="CP000503">
    <property type="protein sequence ID" value="ABM25835.1"/>
    <property type="molecule type" value="Genomic_DNA"/>
</dbReference>
<dbReference type="RefSeq" id="WP_011790287.1">
    <property type="nucleotide sequence ID" value="NC_008750.1"/>
</dbReference>
<dbReference type="SMR" id="A1RME0"/>
<dbReference type="GeneID" id="67442663"/>
<dbReference type="KEGG" id="shw:Sputw3181_3018"/>
<dbReference type="HOGENOM" id="CLU_021669_0_0_6"/>
<dbReference type="UniPathway" id="UPA00575"/>
<dbReference type="Proteomes" id="UP000002597">
    <property type="component" value="Chromosome"/>
</dbReference>
<dbReference type="GO" id="GO:0005829">
    <property type="term" value="C:cytosol"/>
    <property type="evidence" value="ECO:0007669"/>
    <property type="project" value="TreeGrafter"/>
</dbReference>
<dbReference type="GO" id="GO:0004799">
    <property type="term" value="F:thymidylate synthase activity"/>
    <property type="evidence" value="ECO:0007669"/>
    <property type="project" value="UniProtKB-UniRule"/>
</dbReference>
<dbReference type="GO" id="GO:0006231">
    <property type="term" value="P:dTMP biosynthetic process"/>
    <property type="evidence" value="ECO:0007669"/>
    <property type="project" value="UniProtKB-UniRule"/>
</dbReference>
<dbReference type="GO" id="GO:0006235">
    <property type="term" value="P:dTTP biosynthetic process"/>
    <property type="evidence" value="ECO:0007669"/>
    <property type="project" value="UniProtKB-UniRule"/>
</dbReference>
<dbReference type="GO" id="GO:0032259">
    <property type="term" value="P:methylation"/>
    <property type="evidence" value="ECO:0007669"/>
    <property type="project" value="UniProtKB-KW"/>
</dbReference>
<dbReference type="CDD" id="cd00351">
    <property type="entry name" value="TS_Pyrimidine_HMase"/>
    <property type="match status" value="1"/>
</dbReference>
<dbReference type="FunFam" id="3.30.572.10:FF:000001">
    <property type="entry name" value="Thymidylate synthase"/>
    <property type="match status" value="1"/>
</dbReference>
<dbReference type="Gene3D" id="3.30.572.10">
    <property type="entry name" value="Thymidylate synthase/dCMP hydroxymethylase domain"/>
    <property type="match status" value="1"/>
</dbReference>
<dbReference type="HAMAP" id="MF_00008">
    <property type="entry name" value="Thymidy_synth_bact"/>
    <property type="match status" value="1"/>
</dbReference>
<dbReference type="InterPro" id="IPR045097">
    <property type="entry name" value="Thymidate_synth/dCMP_Mease"/>
</dbReference>
<dbReference type="InterPro" id="IPR023451">
    <property type="entry name" value="Thymidate_synth/dCMP_Mease_dom"/>
</dbReference>
<dbReference type="InterPro" id="IPR036926">
    <property type="entry name" value="Thymidate_synth/dCMP_Mease_sf"/>
</dbReference>
<dbReference type="InterPro" id="IPR000398">
    <property type="entry name" value="Thymidylate_synthase"/>
</dbReference>
<dbReference type="InterPro" id="IPR020940">
    <property type="entry name" value="Thymidylate_synthase_AS"/>
</dbReference>
<dbReference type="NCBIfam" id="NF002497">
    <property type="entry name" value="PRK01827.1-3"/>
    <property type="match status" value="1"/>
</dbReference>
<dbReference type="NCBIfam" id="NF002499">
    <property type="entry name" value="PRK01827.1-5"/>
    <property type="match status" value="1"/>
</dbReference>
<dbReference type="NCBIfam" id="TIGR03284">
    <property type="entry name" value="thym_sym"/>
    <property type="match status" value="2"/>
</dbReference>
<dbReference type="PANTHER" id="PTHR11548:SF9">
    <property type="entry name" value="THYMIDYLATE SYNTHASE"/>
    <property type="match status" value="1"/>
</dbReference>
<dbReference type="PANTHER" id="PTHR11548">
    <property type="entry name" value="THYMIDYLATE SYNTHASE 1"/>
    <property type="match status" value="1"/>
</dbReference>
<dbReference type="Pfam" id="PF00303">
    <property type="entry name" value="Thymidylat_synt"/>
    <property type="match status" value="1"/>
</dbReference>
<dbReference type="PRINTS" id="PR00108">
    <property type="entry name" value="THYMDSNTHASE"/>
</dbReference>
<dbReference type="SUPFAM" id="SSF55831">
    <property type="entry name" value="Thymidylate synthase/dCMP hydroxymethylase"/>
    <property type="match status" value="1"/>
</dbReference>
<dbReference type="PROSITE" id="PS00091">
    <property type="entry name" value="THYMIDYLATE_SYNTHASE"/>
    <property type="match status" value="1"/>
</dbReference>
<protein>
    <recommendedName>
        <fullName evidence="1">Thymidylate synthase</fullName>
        <shortName evidence="1">TS</shortName>
        <shortName evidence="1">TSase</shortName>
        <ecNumber evidence="1">2.1.1.45</ecNumber>
    </recommendedName>
</protein>
<sequence>MQQYLDLMKHILAEGVDKSDRTGTGTRSVFGYQMRFDLSKGFPLVTTKKCHMRSIIHELLWFLKGETNIAYLRENKVSIWDEWADDNGDLGPVYGAQWRSWPTQSGDAIDQISQVIAQIKAQPDSRRLIVSAWNVGELDKMALAPCHAFFQFYVADGKLSCQLYQRSCDVFLGLPFNIASYALLTMMVAQQCDLALGDFVWTGGDTHLYSNHMEQTVLQLSREPKPLPLMTILRKPESIFDYQFEDFELTNYNPHPHIKAPVAV</sequence>
<comment type="function">
    <text evidence="1">Catalyzes the reductive methylation of 2'-deoxyuridine-5'-monophosphate (dUMP) to 2'-deoxythymidine-5'-monophosphate (dTMP) while utilizing 5,10-methylenetetrahydrofolate (mTHF) as the methyl donor and reductant in the reaction, yielding dihydrofolate (DHF) as a by-product. This enzymatic reaction provides an intracellular de novo source of dTMP, an essential precursor for DNA biosynthesis.</text>
</comment>
<comment type="catalytic activity">
    <reaction evidence="1">
        <text>dUMP + (6R)-5,10-methylene-5,6,7,8-tetrahydrofolate = 7,8-dihydrofolate + dTMP</text>
        <dbReference type="Rhea" id="RHEA:12104"/>
        <dbReference type="ChEBI" id="CHEBI:15636"/>
        <dbReference type="ChEBI" id="CHEBI:57451"/>
        <dbReference type="ChEBI" id="CHEBI:63528"/>
        <dbReference type="ChEBI" id="CHEBI:246422"/>
        <dbReference type="EC" id="2.1.1.45"/>
    </reaction>
</comment>
<comment type="pathway">
    <text evidence="1">Pyrimidine metabolism; dTTP biosynthesis.</text>
</comment>
<comment type="subunit">
    <text evidence="1">Homodimer.</text>
</comment>
<comment type="subcellular location">
    <subcellularLocation>
        <location evidence="1">Cytoplasm</location>
    </subcellularLocation>
</comment>
<comment type="similarity">
    <text evidence="1">Belongs to the thymidylate synthase family. Bacterial-type ThyA subfamily.</text>
</comment>
<evidence type="ECO:0000255" key="1">
    <source>
        <dbReference type="HAMAP-Rule" id="MF_00008"/>
    </source>
</evidence>
<proteinExistence type="inferred from homology"/>
<reference key="1">
    <citation type="submission" date="2006-12" db="EMBL/GenBank/DDBJ databases">
        <title>Complete sequence of Shewanella sp. W3-18-1.</title>
        <authorList>
            <consortium name="US DOE Joint Genome Institute"/>
            <person name="Copeland A."/>
            <person name="Lucas S."/>
            <person name="Lapidus A."/>
            <person name="Barry K."/>
            <person name="Detter J.C."/>
            <person name="Glavina del Rio T."/>
            <person name="Hammon N."/>
            <person name="Israni S."/>
            <person name="Dalin E."/>
            <person name="Tice H."/>
            <person name="Pitluck S."/>
            <person name="Chain P."/>
            <person name="Malfatti S."/>
            <person name="Shin M."/>
            <person name="Vergez L."/>
            <person name="Schmutz J."/>
            <person name="Larimer F."/>
            <person name="Land M."/>
            <person name="Hauser L."/>
            <person name="Kyrpides N."/>
            <person name="Lykidis A."/>
            <person name="Tiedje J."/>
            <person name="Richardson P."/>
        </authorList>
    </citation>
    <scope>NUCLEOTIDE SEQUENCE [LARGE SCALE GENOMIC DNA]</scope>
    <source>
        <strain>W3-18-1</strain>
    </source>
</reference>
<accession>A1RME0</accession>
<gene>
    <name evidence="1" type="primary">thyA</name>
    <name type="ordered locus">Sputw3181_3018</name>
</gene>
<name>TYSY_SHESW</name>
<organism>
    <name type="scientific">Shewanella sp. (strain W3-18-1)</name>
    <dbReference type="NCBI Taxonomy" id="351745"/>
    <lineage>
        <taxon>Bacteria</taxon>
        <taxon>Pseudomonadati</taxon>
        <taxon>Pseudomonadota</taxon>
        <taxon>Gammaproteobacteria</taxon>
        <taxon>Alteromonadales</taxon>
        <taxon>Shewanellaceae</taxon>
        <taxon>Shewanella</taxon>
    </lineage>
</organism>
<keyword id="KW-0963">Cytoplasm</keyword>
<keyword id="KW-0489">Methyltransferase</keyword>
<keyword id="KW-0545">Nucleotide biosynthesis</keyword>
<keyword id="KW-0808">Transferase</keyword>